<name>AP2B1_BOVIN</name>
<gene>
    <name type="primary">AP2B1</name>
    <name type="synonym">CLAPB1</name>
</gene>
<keyword id="KW-0007">Acetylation</keyword>
<keyword id="KW-1003">Cell membrane</keyword>
<keyword id="KW-0168">Coated pit</keyword>
<keyword id="KW-0903">Direct protein sequencing</keyword>
<keyword id="KW-0254">Endocytosis</keyword>
<keyword id="KW-0472">Membrane</keyword>
<keyword id="KW-0597">Phosphoprotein</keyword>
<keyword id="KW-0653">Protein transport</keyword>
<keyword id="KW-1185">Reference proteome</keyword>
<keyword id="KW-0813">Transport</keyword>
<proteinExistence type="evidence at protein level"/>
<protein>
    <recommendedName>
        <fullName>AP-2 complex subunit beta</fullName>
    </recommendedName>
    <alternativeName>
        <fullName>AP105B</fullName>
    </alternativeName>
    <alternativeName>
        <fullName>Adaptor protein complex AP-2 subunit beta</fullName>
    </alternativeName>
    <alternativeName>
        <fullName>Adaptor-related protein complex 2 subunit beta</fullName>
    </alternativeName>
    <alternativeName>
        <fullName>Beta-2-adaptin</fullName>
    </alternativeName>
    <alternativeName>
        <fullName>Beta-adaptin</fullName>
    </alternativeName>
    <alternativeName>
        <fullName>Clathrin assembly protein complex 2 beta large chain</fullName>
    </alternativeName>
    <alternativeName>
        <fullName>Plasma membrane adaptor HA2/AP2 adaptin beta subunit</fullName>
    </alternativeName>
</protein>
<evidence type="ECO:0000250" key="1"/>
<evidence type="ECO:0000250" key="2">
    <source>
        <dbReference type="UniProtKB" id="P62944"/>
    </source>
</evidence>
<evidence type="ECO:0000250" key="3">
    <source>
        <dbReference type="UniProtKB" id="P63010"/>
    </source>
</evidence>
<evidence type="ECO:0000250" key="4">
    <source>
        <dbReference type="UniProtKB" id="Q9DBG3"/>
    </source>
</evidence>
<evidence type="ECO:0000305" key="5"/>
<feature type="initiator methionine" description="Removed" evidence="3">
    <location>
        <position position="1"/>
    </location>
</feature>
<feature type="chain" id="PRO_0000193741" description="AP-2 complex subunit beta">
    <location>
        <begin position="2"/>
        <end position="937"/>
    </location>
</feature>
<feature type="modified residue" description="N-acetylthreonine" evidence="3">
    <location>
        <position position="2"/>
    </location>
</feature>
<feature type="modified residue" description="Phosphoserine" evidence="3">
    <location>
        <position position="4"/>
    </location>
</feature>
<feature type="modified residue" description="N6-acetyllysine" evidence="3">
    <location>
        <position position="265"/>
    </location>
</feature>
<feature type="modified residue" description="Phosphotyrosine" evidence="3">
    <location>
        <position position="737"/>
    </location>
</feature>
<feature type="modified residue" description="Phosphotyrosine" evidence="2">
    <location>
        <position position="928"/>
    </location>
</feature>
<reference key="1">
    <citation type="journal article" date="2009" name="Science">
        <title>The genome sequence of taurine cattle: a window to ruminant biology and evolution.</title>
        <authorList>
            <consortium name="The bovine genome sequencing and analysis consortium"/>
        </authorList>
    </citation>
    <scope>NUCLEOTIDE SEQUENCE [LARGE SCALE GENOMIC DNA]</scope>
    <source>
        <strain>Hereford</strain>
    </source>
</reference>
<reference key="2">
    <citation type="journal article" date="1990" name="J. Biol. Chem.">
        <title>Conservation and diversity in families of coated vesicle adaptins.</title>
        <authorList>
            <person name="Ponnambalam S."/>
            <person name="Robinson M.S."/>
            <person name="Jackson A.P."/>
            <person name="Peiperl L."/>
            <person name="Parham P."/>
        </authorList>
    </citation>
    <scope>NUCLEOTIDE SEQUENCE [MRNA] OF 33-268</scope>
    <scope>PARTIAL PROTEIN SEQUENCE</scope>
    <source>
        <tissue>Lymphocyte</tissue>
    </source>
</reference>
<organism>
    <name type="scientific">Bos taurus</name>
    <name type="common">Bovine</name>
    <dbReference type="NCBI Taxonomy" id="9913"/>
    <lineage>
        <taxon>Eukaryota</taxon>
        <taxon>Metazoa</taxon>
        <taxon>Chordata</taxon>
        <taxon>Craniata</taxon>
        <taxon>Vertebrata</taxon>
        <taxon>Euteleostomi</taxon>
        <taxon>Mammalia</taxon>
        <taxon>Eutheria</taxon>
        <taxon>Laurasiatheria</taxon>
        <taxon>Artiodactyla</taxon>
        <taxon>Ruminantia</taxon>
        <taxon>Pecora</taxon>
        <taxon>Bovidae</taxon>
        <taxon>Bovinae</taxon>
        <taxon>Bos</taxon>
    </lineage>
</organism>
<comment type="function">
    <text evidence="1 3">Component of the adaptor protein complex 2 (AP-2). Adaptor protein complexes function in protein transport via transport vesicles in different membrane traffic pathways. Adaptor protein complexes are vesicle coat components and appear to be involved in cargo selection and vesicle formation. AP-2 is involved in clathrin-dependent endocytosis in which cargo proteins are incorporated into vesicles surrounded by clathrin (clathrin-coated vesicles, CCVs) which are destined for fusion with the early endosome. The clathrin lattice serves as a mechanical scaffold but is itself unable to bind directly to membrane components. Clathrin-associated adaptor protein (AP) complexes which can bind directly to both the clathrin lattice and to the lipid and protein components of membranes are considered to be the major clathrin adaptors contributing the CCV formation. AP-2 also serves as a cargo receptor to selectively sort the membrane proteins involved in receptor-mediated endocytosis. AP-2 seems to play a role in the recycling of synaptic vesicle membranes from the presynaptic surface. AP-2 recognizes Y-X-X-[FILMV] (Y-X-X-Phi) and [ED]-X-X-X-L-[LI] endocytosis signal motifs within the cytosolic tails of transmembrane cargo molecules. AP-2 may also play a role in maintaining normal post-endocytic trafficking through the ARF6-regulated, non-clathrin pathway. During long-term potentiation in hippocampal neurons, AP-2 is responsible for the endocytosis of ADAM10 (By similarity). The AP-2 beta subunit acts via its C-terminal appendage domain as a scaffolding platform for endocytic accessory proteins; at least some clathrin-associated sorting proteins (CLASPs) are recognized by their [DE]-X(1,2)-F-X-X-[FL]-X-X-X-R motif. The AP-2 beta subunit binds to clathrin heavy chain, promoting clathrin lattice assembly; clathrin displaces at least some CLASPs from AP2B1 which probably then can be positioned for further coat assembly (By similarity).</text>
</comment>
<comment type="subunit">
    <text evidence="2 3 4">adapter protein complex 2 (AP-2) is a heterotetramer composed of two large adaptins (alpha-type subunit AP2A1 or AP2A2 and beta-type subunit AP2B1), a medium adaptin (mu-type subunit AP2M1) and a small adaptin (sigma-type subunit AP2S1) (By similarity). Interacts with EPN1 (By similarity). Interacts with EPS15; clathrin competes with EPS15 (By similarity). Interacts with SNAP91; clathrin competes with SNAP91 (By similarity). Interacts with CLTC; clathrin competes with EPS15, SNAP91 and PIP5K1C (By similarity). Interacts with LDLRAP1 (By similarity). Interacts with AMPH and BIN1 (By similarity). Interacts with ARF6 (GDP-bound) (By similarity). Interacts (dephosphorylated at Tyr-737) with ARRB1; phosphorylation of AP2B1 at Tyr-737 disrupts the interaction (By similarity). Interacts with SLC2A8 (By similarity). Interacts with SCYL1 and SCYL2 (By similarity). Interacts with TGFBR1 and TGFBR2 (By similarity). Interacts with PIP5K1C; clathrin competes with PIP5K1C (By similarity). Interacts with DENND1B (By similarity). Interacts with FCHO1 (By similarity). Interacts with RFTN1 (By similarity). Interacts with KIAA1107 (By similarity). Together with AP2A1 or AP2A2 and AP2M1, it interacts with ADAM10; this interaction facilitates ADAM10 endocytosis from the plasma membrane during long-term potentiation in hippocampal neurons (By similarity).</text>
</comment>
<comment type="subcellular location">
    <subcellularLocation>
        <location evidence="1">Cell membrane</location>
    </subcellularLocation>
    <subcellularLocation>
        <location evidence="1">Membrane</location>
        <location evidence="1">Coated pit</location>
        <topology evidence="1">Peripheral membrane protein</topology>
        <orientation evidence="1">Cytoplasmic side</orientation>
    </subcellularLocation>
    <text evidence="1">AP-2 appears to be excluded from internalizing CCVs and to disengage from sites of endocytosis seconds before internalization of the nascent CCV.</text>
</comment>
<comment type="PTM">
    <text>The N-terminus is blocked.</text>
</comment>
<comment type="PTM">
    <text evidence="1">Phosphorylation at Tyr-737 by SRC occurs at the plasma membrane in clathrin-coated vesicles (CCVs).</text>
</comment>
<comment type="similarity">
    <text evidence="5">Belongs to the adaptor complexes large subunit family.</text>
</comment>
<sequence>MTDSKYFTTNKKGEIFELKAELNNEKKEKRKEAVKKVIAAMTVGKDVSSLFPDVVNCMQTDNLELKKLVYLYLMNYAKSQPDMAIMAVNSFVKDCEDPNPLIRALAVRTMGCIRVDKITEYLCEPLRKCLKDEDPYVRKTAAVCVAKLHDINAQMVEDQGFLDSLRDLIADSNPMVVANAVAALSEISESHPNSNLLDLNPQNINKLLTALNECTEWGQIFILDCLSNYNPKDDREAQSICERVTPRLSHANSAVVLSAVKVLMKFLELLPKESDYYNMLLKKLAPPLVTLLSGEPEVQYVALRNINLIVQKRPEILKQEIKVFFVKYNDPIYVKLEKLDIMIRLASQANIAQVLAELKEYATEVDVDFVRKAVRAIGRCAIKVEQSAERCVSTLLDLIQTKVNYVVQEAIVVIRDIFRKYPNKYESIIATLCENLDSLDEPDARAAMIWIVGEYAERIDNADELLESFLEGFHDESTQVQLTLLTAIVKLFLKKPSETQELVQQVLSLATQDSDNPDLRDRGYIYWRLLSTDPVTAKEVVLSEKPLISEETDLIEPTLLDELICHIGSLASVYHKPPNAFVEGSHGIHRKHLPIHHGSTDAGDSPVGTTTATNLEQPQVIPSQGDLLGDLLNLDLGPPVNVPQVSSMQMGAVDLLGGGLDSLVGQSFIPSSVPATFAPSPTPAVVSSGLNDLFELSTGIGMAPGGYVAPKAVWLPAVKAKGLEISGTFTHRQGHIYMEMNFTNKALQHMTDFAIQFNKNSFGVIPSTPLAIHTPLMPNQSIDVSLPLNTLGPVMKMEPLNNLQVAVKNNIDVFYFSCLIPLNVLFVEDGKMERQVFLATWKDIPNENELQFQIKECHLNADTVSSKLQNNNVYTIAKRNVEGQDMLYQSLKLTNGIWILAELRIQPGNPNYTLSLKCRAPEVSQYIYQVYDSILKN</sequence>
<dbReference type="EMBL" id="M34177">
    <property type="protein sequence ID" value="AAA30405.1"/>
    <property type="molecule type" value="mRNA"/>
</dbReference>
<dbReference type="PIR" id="B35553">
    <property type="entry name" value="B35553"/>
</dbReference>
<dbReference type="RefSeq" id="XP_024835394.1">
    <property type="nucleotide sequence ID" value="XM_024979626.2"/>
</dbReference>
<dbReference type="RefSeq" id="XP_059733711.1">
    <property type="nucleotide sequence ID" value="XM_059877728.1"/>
</dbReference>
<dbReference type="SMR" id="P63009"/>
<dbReference type="DIP" id="DIP-44826N"/>
<dbReference type="ELM" id="P63009"/>
<dbReference type="IntAct" id="P63009">
    <property type="interactions" value="2"/>
</dbReference>
<dbReference type="MINT" id="P63009"/>
<dbReference type="PeptideAtlas" id="P63009"/>
<dbReference type="Ensembl" id="ENSBTAT00000027078.7">
    <property type="protein sequence ID" value="ENSBTAP00000027078.7"/>
    <property type="gene ID" value="ENSBTAG00000020316.7"/>
</dbReference>
<dbReference type="GeneID" id="282183"/>
<dbReference type="VEuPathDB" id="HostDB:ENSBTAG00000020316"/>
<dbReference type="VGNC" id="VGNC:55033">
    <property type="gene designation" value="AP2B1"/>
</dbReference>
<dbReference type="GeneTree" id="ENSGT00940000155206"/>
<dbReference type="OrthoDB" id="10254310at2759"/>
<dbReference type="Proteomes" id="UP000009136">
    <property type="component" value="Chromosome 19"/>
</dbReference>
<dbReference type="Bgee" id="ENSBTAG00000020316">
    <property type="expression patterns" value="Expressed in spermatid and 105 other cell types or tissues"/>
</dbReference>
<dbReference type="GO" id="GO:0030131">
    <property type="term" value="C:clathrin adaptor complex"/>
    <property type="evidence" value="ECO:0007669"/>
    <property type="project" value="InterPro"/>
</dbReference>
<dbReference type="GO" id="GO:0005905">
    <property type="term" value="C:clathrin-coated pit"/>
    <property type="evidence" value="ECO:0007669"/>
    <property type="project" value="UniProtKB-KW"/>
</dbReference>
<dbReference type="GO" id="GO:0031410">
    <property type="term" value="C:cytoplasmic vesicle"/>
    <property type="evidence" value="ECO:0007669"/>
    <property type="project" value="UniProtKB-ARBA"/>
</dbReference>
<dbReference type="GO" id="GO:0005886">
    <property type="term" value="C:plasma membrane"/>
    <property type="evidence" value="ECO:0007669"/>
    <property type="project" value="UniProtKB-SubCell"/>
</dbReference>
<dbReference type="GO" id="GO:0030276">
    <property type="term" value="F:clathrin binding"/>
    <property type="evidence" value="ECO:0007669"/>
    <property type="project" value="InterPro"/>
</dbReference>
<dbReference type="GO" id="GO:0006897">
    <property type="term" value="P:endocytosis"/>
    <property type="evidence" value="ECO:0007669"/>
    <property type="project" value="UniProtKB-KW"/>
</dbReference>
<dbReference type="GO" id="GO:0006886">
    <property type="term" value="P:intracellular protein transport"/>
    <property type="evidence" value="ECO:0007669"/>
    <property type="project" value="InterPro"/>
</dbReference>
<dbReference type="FunFam" id="1.25.10.10:FF:000002">
    <property type="entry name" value="AP complex subunit beta"/>
    <property type="match status" value="1"/>
</dbReference>
<dbReference type="FunFam" id="2.60.40.1150:FF:000001">
    <property type="entry name" value="AP complex subunit beta"/>
    <property type="match status" value="1"/>
</dbReference>
<dbReference type="FunFam" id="3.30.310.10:FF:000003">
    <property type="entry name" value="AP complex subunit beta"/>
    <property type="match status" value="1"/>
</dbReference>
<dbReference type="Gene3D" id="2.60.40.1150">
    <property type="match status" value="1"/>
</dbReference>
<dbReference type="Gene3D" id="1.25.10.10">
    <property type="entry name" value="Leucine-rich Repeat Variant"/>
    <property type="match status" value="1"/>
</dbReference>
<dbReference type="Gene3D" id="3.30.310.10">
    <property type="entry name" value="TATA-Binding Protein"/>
    <property type="match status" value="1"/>
</dbReference>
<dbReference type="InterPro" id="IPR026739">
    <property type="entry name" value="AP_beta"/>
</dbReference>
<dbReference type="InterPro" id="IPR016342">
    <property type="entry name" value="AP_complex_bsu_1_2_4"/>
</dbReference>
<dbReference type="InterPro" id="IPR011989">
    <property type="entry name" value="ARM-like"/>
</dbReference>
<dbReference type="InterPro" id="IPR016024">
    <property type="entry name" value="ARM-type_fold"/>
</dbReference>
<dbReference type="InterPro" id="IPR000225">
    <property type="entry name" value="Armadillo"/>
</dbReference>
<dbReference type="InterPro" id="IPR015151">
    <property type="entry name" value="B-adaptin_app_sub_C"/>
</dbReference>
<dbReference type="InterPro" id="IPR002553">
    <property type="entry name" value="Clathrin/coatomer_adapt-like_N"/>
</dbReference>
<dbReference type="InterPro" id="IPR008152">
    <property type="entry name" value="Clathrin_a/b/g-adaptin_app_Ig"/>
</dbReference>
<dbReference type="InterPro" id="IPR013041">
    <property type="entry name" value="Clathrin_app_Ig-like_sf"/>
</dbReference>
<dbReference type="InterPro" id="IPR013037">
    <property type="entry name" value="Clathrin_b-adaptin_app_Ig-like"/>
</dbReference>
<dbReference type="InterPro" id="IPR009028">
    <property type="entry name" value="Coatomer/calthrin_app_sub_C"/>
</dbReference>
<dbReference type="InterPro" id="IPR012295">
    <property type="entry name" value="TBP_dom_sf"/>
</dbReference>
<dbReference type="PANTHER" id="PTHR11134">
    <property type="entry name" value="ADAPTOR COMPLEX SUBUNIT BETA FAMILY MEMBER"/>
    <property type="match status" value="1"/>
</dbReference>
<dbReference type="Pfam" id="PF01602">
    <property type="entry name" value="Adaptin_N"/>
    <property type="match status" value="1"/>
</dbReference>
<dbReference type="Pfam" id="PF02883">
    <property type="entry name" value="Alpha_adaptinC2"/>
    <property type="match status" value="1"/>
</dbReference>
<dbReference type="Pfam" id="PF09066">
    <property type="entry name" value="B2-adapt-app_C"/>
    <property type="match status" value="1"/>
</dbReference>
<dbReference type="PIRSF" id="PIRSF002291">
    <property type="entry name" value="AP_complex_beta"/>
    <property type="match status" value="1"/>
</dbReference>
<dbReference type="SMART" id="SM00809">
    <property type="entry name" value="Alpha_adaptinC2"/>
    <property type="match status" value="1"/>
</dbReference>
<dbReference type="SMART" id="SM00185">
    <property type="entry name" value="ARM"/>
    <property type="match status" value="2"/>
</dbReference>
<dbReference type="SMART" id="SM01020">
    <property type="entry name" value="B2-adapt-app_C"/>
    <property type="match status" value="1"/>
</dbReference>
<dbReference type="SUPFAM" id="SSF48371">
    <property type="entry name" value="ARM repeat"/>
    <property type="match status" value="1"/>
</dbReference>
<dbReference type="SUPFAM" id="SSF49348">
    <property type="entry name" value="Clathrin adaptor appendage domain"/>
    <property type="match status" value="1"/>
</dbReference>
<dbReference type="SUPFAM" id="SSF55711">
    <property type="entry name" value="Subdomain of clathrin and coatomer appendage domain"/>
    <property type="match status" value="1"/>
</dbReference>
<accession>P63009</accession>
<accession>P21851</accession>